<keyword id="KW-0002">3D-structure</keyword>
<keyword id="KW-0067">ATP-binding</keyword>
<keyword id="KW-0963">Cytoplasm</keyword>
<keyword id="KW-0547">Nucleotide-binding</keyword>
<proteinExistence type="evidence at protein level"/>
<accession>E1VBK4</accession>
<accession>D2TGC1</accession>
<accession>D4AEP4</accession>
<name>TEAD_HALED</name>
<gene>
    <name type="primary">teaD</name>
    <name type="ordered locus">HELO_4277</name>
</gene>
<feature type="chain" id="PRO_0000428827" description="TRAP-T-associated universal stress protein TeaD">
    <location>
        <begin position="1"/>
        <end position="147"/>
    </location>
</feature>
<feature type="binding site" evidence="2">
    <location>
        <begin position="8"/>
        <end position="10"/>
    </location>
    <ligand>
        <name>ATP</name>
        <dbReference type="ChEBI" id="CHEBI:30616"/>
    </ligand>
</feature>
<feature type="binding site" evidence="2">
    <location>
        <position position="38"/>
    </location>
    <ligand>
        <name>ATP</name>
        <dbReference type="ChEBI" id="CHEBI:30616"/>
    </ligand>
</feature>
<feature type="binding site" evidence="2">
    <location>
        <begin position="117"/>
        <end position="122"/>
    </location>
    <ligand>
        <name>ATP</name>
        <dbReference type="ChEBI" id="CHEBI:30616"/>
    </ligand>
</feature>
<feature type="binding site" evidence="2">
    <location>
        <begin position="131"/>
        <end position="133"/>
    </location>
    <ligand>
        <name>ATP</name>
        <dbReference type="ChEBI" id="CHEBI:30616"/>
    </ligand>
</feature>
<feature type="strand" evidence="4">
    <location>
        <begin position="3"/>
        <end position="8"/>
    </location>
</feature>
<feature type="helix" evidence="4">
    <location>
        <begin position="13"/>
        <end position="29"/>
    </location>
</feature>
<feature type="strand" evidence="4">
    <location>
        <begin position="32"/>
        <end position="39"/>
    </location>
</feature>
<feature type="helix" evidence="4">
    <location>
        <begin position="42"/>
        <end position="47"/>
    </location>
</feature>
<feature type="strand" evidence="4">
    <location>
        <begin position="49"/>
        <end position="51"/>
    </location>
</feature>
<feature type="helix" evidence="4">
    <location>
        <begin position="55"/>
        <end position="57"/>
    </location>
</feature>
<feature type="helix" evidence="4">
    <location>
        <begin position="63"/>
        <end position="81"/>
    </location>
</feature>
<feature type="helix" evidence="4">
    <location>
        <begin position="86"/>
        <end position="88"/>
    </location>
</feature>
<feature type="strand" evidence="4">
    <location>
        <begin position="89"/>
        <end position="96"/>
    </location>
</feature>
<feature type="helix" evidence="4">
    <location>
        <begin position="98"/>
        <end position="108"/>
    </location>
</feature>
<feature type="strand" evidence="4">
    <location>
        <begin position="112"/>
        <end position="119"/>
    </location>
</feature>
<feature type="helix" evidence="4">
    <location>
        <begin position="131"/>
        <end position="139"/>
    </location>
</feature>
<feature type="strand" evidence="4">
    <location>
        <begin position="144"/>
        <end position="147"/>
    </location>
</feature>
<comment type="function">
    <text evidence="2">ATP-binding protein that negatively regulates activity of the tripartite ATP-independent periplasmic (TRAP) ectoine transport system TeaABC. May regulate uptake according to the ATP status of the cell.</text>
</comment>
<comment type="subunit">
    <text evidence="2">Homodimer or homotetramer; in equilibrium. The dimer/tetramer ratio is ATP-dependent. ATP stabilizes dimer-dimer complexes, with one ATP molecule bound to each monomer.</text>
</comment>
<comment type="subcellular location">
    <subcellularLocation>
        <location evidence="1">Cytoplasm</location>
    </subcellularLocation>
</comment>
<comment type="induction">
    <text evidence="2">Cotranscribed along with teaABC.</text>
</comment>
<comment type="disruption phenotype">
    <text evidence="2">Deletion results in an enhanced uptake for ectoine by TeaABC.</text>
</comment>
<comment type="similarity">
    <text evidence="3">Belongs to the universal stress protein A family.</text>
</comment>
<organism>
    <name type="scientific">Halomonas elongata (strain ATCC 33173 / DSM 2581 / NBRC 15536 / NCIMB 2198 / 1H9)</name>
    <dbReference type="NCBI Taxonomy" id="768066"/>
    <lineage>
        <taxon>Bacteria</taxon>
        <taxon>Pseudomonadati</taxon>
        <taxon>Pseudomonadota</taxon>
        <taxon>Gammaproteobacteria</taxon>
        <taxon>Oceanospirillales</taxon>
        <taxon>Halomonadaceae</taxon>
        <taxon>Halomonas</taxon>
    </lineage>
</organism>
<protein>
    <recommendedName>
        <fullName>TRAP-T-associated universal stress protein TeaD</fullName>
    </recommendedName>
    <alternativeName>
        <fullName>UspA domain transporter regulator TeaD</fullName>
    </alternativeName>
</protein>
<reference key="1">
    <citation type="journal article" date="2010" name="Biochemistry">
        <title>Structure and function of the universal stress protein TeaD and its role in regulating the ectoine transporter TeaABC of Halomonas elongata DSM 2581(T).</title>
        <authorList>
            <person name="Schweikhard E.S."/>
            <person name="Kuhlmann S.I."/>
            <person name="Kunte H.J."/>
            <person name="Grammann K."/>
            <person name="Ziegler C.M."/>
        </authorList>
    </citation>
    <scope>NUCLEOTIDE SEQUENCE [GENOMIC DNA]</scope>
    <scope>FUNCTION</scope>
    <scope>SUBUNIT</scope>
    <scope>INDUCTION</scope>
    <scope>DISRUPTION PHENOTYPE</scope>
    <scope>X-RAY CRYSTALLOGRAPHY (1.90 ANGSTROMS) IN COMPLEX WITH ATP</scope>
    <source>
        <strain>ATCC 33173 / DSM 2581 / NBRC 15536 / NCIMB 2198 / 1H9</strain>
    </source>
</reference>
<reference key="2">
    <citation type="journal article" date="2011" name="Environ. Microbiol.">
        <title>A blueprint of ectoine metabolism from the genome of the industrial producer Halomonas elongata DSM 2581(T).</title>
        <authorList>
            <person name="Schwibbert K."/>
            <person name="Marin-Sanguino A."/>
            <person name="Bagyan I."/>
            <person name="Heidrich G."/>
            <person name="Lentzen G."/>
            <person name="Seitz H."/>
            <person name="Rampp M."/>
            <person name="Schuster S.C."/>
            <person name="Klenk H.P."/>
            <person name="Pfeiffer F."/>
            <person name="Oesterhelt D."/>
            <person name="Kunte H.J."/>
        </authorList>
    </citation>
    <scope>NUCLEOTIDE SEQUENCE [LARGE SCALE GENOMIC DNA]</scope>
    <source>
        <strain>ATCC 33173 / DSM 2581 / NBRC 15536 / NCIMB 2198 / 1H9</strain>
    </source>
</reference>
<evidence type="ECO:0000250" key="1"/>
<evidence type="ECO:0000269" key="2">
    <source>
    </source>
</evidence>
<evidence type="ECO:0000305" key="3"/>
<evidence type="ECO:0007829" key="4">
    <source>
        <dbReference type="PDB" id="3HGM"/>
    </source>
</evidence>
<dbReference type="EMBL" id="FN435983">
    <property type="protein sequence ID" value="CBA13558.1"/>
    <property type="molecule type" value="Genomic_DNA"/>
</dbReference>
<dbReference type="EMBL" id="FN869568">
    <property type="protein sequence ID" value="CBV44161.1"/>
    <property type="molecule type" value="Genomic_DNA"/>
</dbReference>
<dbReference type="RefSeq" id="WP_013334031.1">
    <property type="nucleotide sequence ID" value="NC_014532.2"/>
</dbReference>
<dbReference type="PDB" id="3HGM">
    <property type="method" value="X-ray"/>
    <property type="resolution" value="1.90 A"/>
    <property type="chains" value="A/B/C/D=1-147"/>
</dbReference>
<dbReference type="PDBsum" id="3HGM"/>
<dbReference type="SMR" id="E1VBK4"/>
<dbReference type="STRING" id="768066.HELO_4277"/>
<dbReference type="GeneID" id="91011727"/>
<dbReference type="KEGG" id="hel:HELO_4277"/>
<dbReference type="eggNOG" id="COG0589">
    <property type="taxonomic scope" value="Bacteria"/>
</dbReference>
<dbReference type="HOGENOM" id="CLU_049301_11_0_6"/>
<dbReference type="OrthoDB" id="9792500at2"/>
<dbReference type="EvolutionaryTrace" id="E1VBK4"/>
<dbReference type="Proteomes" id="UP000008707">
    <property type="component" value="Chromosome"/>
</dbReference>
<dbReference type="GO" id="GO:0005737">
    <property type="term" value="C:cytoplasm"/>
    <property type="evidence" value="ECO:0007669"/>
    <property type="project" value="UniProtKB-SubCell"/>
</dbReference>
<dbReference type="GO" id="GO:0005524">
    <property type="term" value="F:ATP binding"/>
    <property type="evidence" value="ECO:0007669"/>
    <property type="project" value="UniProtKB-KW"/>
</dbReference>
<dbReference type="CDD" id="cd00293">
    <property type="entry name" value="USP-like"/>
    <property type="match status" value="1"/>
</dbReference>
<dbReference type="Gene3D" id="3.40.50.620">
    <property type="entry name" value="HUPs"/>
    <property type="match status" value="1"/>
</dbReference>
<dbReference type="InterPro" id="IPR014729">
    <property type="entry name" value="Rossmann-like_a/b/a_fold"/>
</dbReference>
<dbReference type="InterPro" id="IPR006015">
    <property type="entry name" value="Universal_stress_UspA"/>
</dbReference>
<dbReference type="InterPro" id="IPR006016">
    <property type="entry name" value="UspA"/>
</dbReference>
<dbReference type="PANTHER" id="PTHR46268">
    <property type="entry name" value="STRESS RESPONSE PROTEIN NHAX"/>
    <property type="match status" value="1"/>
</dbReference>
<dbReference type="PANTHER" id="PTHR46268:SF6">
    <property type="entry name" value="UNIVERSAL STRESS PROTEIN UP12"/>
    <property type="match status" value="1"/>
</dbReference>
<dbReference type="Pfam" id="PF00582">
    <property type="entry name" value="Usp"/>
    <property type="match status" value="1"/>
</dbReference>
<dbReference type="PRINTS" id="PR01438">
    <property type="entry name" value="UNVRSLSTRESS"/>
</dbReference>
<dbReference type="SUPFAM" id="SSF52402">
    <property type="entry name" value="Adenine nucleotide alpha hydrolases-like"/>
    <property type="match status" value="1"/>
</dbReference>
<sequence>MFNRIMVPVDGSKGAVKALEKGVGLQQLTGAELYILCVFKHHSLLEASLSMVRPEQLDIPDDALKDYATEIAVQAKTRATELGVPADKVRAFVKGGRPSRTIVRFARKRECDLVVIGAQGTNGDKSLLLGSVAQRVAGSAHCPVLVV</sequence>